<dbReference type="EMBL" id="U72205">
    <property type="protein sequence ID" value="AAC64858.1"/>
    <property type="molecule type" value="mRNA"/>
</dbReference>
<dbReference type="PDB" id="8OVA">
    <property type="method" value="EM"/>
    <property type="resolution" value="2.47 A"/>
    <property type="chains" value="A7=1-318"/>
</dbReference>
<dbReference type="PDB" id="8OVE">
    <property type="method" value="EM"/>
    <property type="resolution" value="2.60 A"/>
    <property type="chains" value="A7=1-318"/>
</dbReference>
<dbReference type="PDBsum" id="8OVA"/>
<dbReference type="PDBsum" id="8OVE"/>
<dbReference type="EMDB" id="EMD-17208"/>
<dbReference type="EMDB" id="EMD-17212"/>
<dbReference type="SMR" id="P69103"/>
<dbReference type="GO" id="GO:0005737">
    <property type="term" value="C:cytoplasm"/>
    <property type="evidence" value="ECO:0000314"/>
    <property type="project" value="GeneDB"/>
</dbReference>
<dbReference type="GO" id="GO:1990904">
    <property type="term" value="C:ribonucleoprotein complex"/>
    <property type="evidence" value="ECO:0007669"/>
    <property type="project" value="UniProtKB-KW"/>
</dbReference>
<dbReference type="GO" id="GO:0005840">
    <property type="term" value="C:ribosome"/>
    <property type="evidence" value="ECO:0000314"/>
    <property type="project" value="GeneDB"/>
</dbReference>
<dbReference type="GO" id="GO:0003729">
    <property type="term" value="F:mRNA binding"/>
    <property type="evidence" value="ECO:0000314"/>
    <property type="project" value="GeneDB"/>
</dbReference>
<dbReference type="GO" id="GO:0043022">
    <property type="term" value="F:ribosome binding"/>
    <property type="evidence" value="ECO:0007669"/>
    <property type="project" value="InterPro"/>
</dbReference>
<dbReference type="GO" id="GO:0045182">
    <property type="term" value="F:translation regulator activity"/>
    <property type="evidence" value="ECO:0007669"/>
    <property type="project" value="InterPro"/>
</dbReference>
<dbReference type="GO" id="GO:0006915">
    <property type="term" value="P:apoptotic process"/>
    <property type="evidence" value="ECO:0000304"/>
    <property type="project" value="GeneDB"/>
</dbReference>
<dbReference type="GO" id="GO:0032465">
    <property type="term" value="P:regulation of cytokinesis"/>
    <property type="evidence" value="ECO:0000315"/>
    <property type="project" value="GeneDB"/>
</dbReference>
<dbReference type="CDD" id="cd00200">
    <property type="entry name" value="WD40"/>
    <property type="match status" value="1"/>
</dbReference>
<dbReference type="FunFam" id="2.130.10.10:FF:000018">
    <property type="entry name" value="Receptor for activated C kinase 1"/>
    <property type="match status" value="1"/>
</dbReference>
<dbReference type="Gene3D" id="2.130.10.10">
    <property type="entry name" value="YVTN repeat-like/Quinoprotein amine dehydrogenase"/>
    <property type="match status" value="1"/>
</dbReference>
<dbReference type="InterPro" id="IPR020472">
    <property type="entry name" value="G-protein_beta_WD-40_rep"/>
</dbReference>
<dbReference type="InterPro" id="IPR045223">
    <property type="entry name" value="RACK1-like"/>
</dbReference>
<dbReference type="InterPro" id="IPR015943">
    <property type="entry name" value="WD40/YVTN_repeat-like_dom_sf"/>
</dbReference>
<dbReference type="InterPro" id="IPR019775">
    <property type="entry name" value="WD40_repeat_CS"/>
</dbReference>
<dbReference type="InterPro" id="IPR036322">
    <property type="entry name" value="WD40_repeat_dom_sf"/>
</dbReference>
<dbReference type="InterPro" id="IPR001680">
    <property type="entry name" value="WD40_rpt"/>
</dbReference>
<dbReference type="PANTHER" id="PTHR19868">
    <property type="entry name" value="RECEPTOR FOR ACTIVATED PROTEIN KINASE C RACK1"/>
    <property type="match status" value="1"/>
</dbReference>
<dbReference type="Pfam" id="PF00400">
    <property type="entry name" value="WD40"/>
    <property type="match status" value="6"/>
</dbReference>
<dbReference type="PRINTS" id="PR00320">
    <property type="entry name" value="GPROTEINBRPT"/>
</dbReference>
<dbReference type="SMART" id="SM00320">
    <property type="entry name" value="WD40"/>
    <property type="match status" value="7"/>
</dbReference>
<dbReference type="SUPFAM" id="SSF50978">
    <property type="entry name" value="WD40 repeat-like"/>
    <property type="match status" value="1"/>
</dbReference>
<dbReference type="PROSITE" id="PS00678">
    <property type="entry name" value="WD_REPEATS_1"/>
    <property type="match status" value="4"/>
</dbReference>
<dbReference type="PROSITE" id="PS50082">
    <property type="entry name" value="WD_REPEATS_2"/>
    <property type="match status" value="5"/>
</dbReference>
<dbReference type="PROSITE" id="PS50294">
    <property type="entry name" value="WD_REPEATS_REGION"/>
    <property type="match status" value="1"/>
</dbReference>
<evidence type="ECO:0000305" key="1"/>
<feature type="chain" id="PRO_0000127746" description="Small ribosomal subunit protein RACK1">
    <location>
        <begin position="1"/>
        <end position="318"/>
    </location>
</feature>
<feature type="repeat" description="WD 1">
    <location>
        <begin position="11"/>
        <end position="44"/>
    </location>
</feature>
<feature type="repeat" description="WD 2">
    <location>
        <begin position="65"/>
        <end position="95"/>
    </location>
</feature>
<feature type="repeat" description="WD 3">
    <location>
        <begin position="107"/>
        <end position="137"/>
    </location>
</feature>
<feature type="repeat" description="WD 4">
    <location>
        <begin position="150"/>
        <end position="182"/>
    </location>
</feature>
<feature type="repeat" description="WD 5">
    <location>
        <begin position="194"/>
        <end position="224"/>
    </location>
</feature>
<feature type="repeat" description="WD 6">
    <location>
        <begin position="235"/>
        <end position="264"/>
    </location>
</feature>
<feature type="repeat" description="WD 7">
    <location>
        <begin position="282"/>
        <end position="315"/>
    </location>
</feature>
<sequence length="318" mass="34690">MAVAYEGQLTGHRGWVTSLACPQTPETATKVVSTSRDKTLLSWGPNPDRHSSECSYGLPDRRLEGHSAFVSDVALSNNGNFAVSASWDHSLRLWNLQNGQCQYKFLGHTKDVLSVAFSPDNRQIVSGGRDNALRVWNVKGECMHTLSRGAHTDWVSCVRFSPSLDAPVIVSGGWDNLVKVWDLATGRLVTDLKGHTNYVTSVTVSPDGSLCASSDKDGVARLWDLTKGEALSEMAAGAPINQICFSPNRYWMCAATEKGIRIFDLENKDIIVELAPEHQGSKKIVPECVSIAWSADGSTLYSGYTDNVIRVWGVSENA</sequence>
<organism>
    <name type="scientific">Trypanosoma brucei brucei</name>
    <dbReference type="NCBI Taxonomy" id="5702"/>
    <lineage>
        <taxon>Eukaryota</taxon>
        <taxon>Discoba</taxon>
        <taxon>Euglenozoa</taxon>
        <taxon>Kinetoplastea</taxon>
        <taxon>Metakinetoplastina</taxon>
        <taxon>Trypanosomatida</taxon>
        <taxon>Trypanosomatidae</taxon>
        <taxon>Trypanosoma</taxon>
    </lineage>
</organism>
<accession>P69103</accession>
<accession>O61075</accession>
<accession>Q94775</accession>
<proteinExistence type="evidence at protein level"/>
<name>GBLP_TRYBB</name>
<protein>
    <recommendedName>
        <fullName evidence="1">Small ribosomal subunit protein RACK1</fullName>
    </recommendedName>
    <alternativeName>
        <fullName>Activated protein kinase C receptor homolog</fullName>
    </alternativeName>
    <alternativeName>
        <fullName>Guanine nucleotide-binding protein subunit beta-like protein</fullName>
    </alternativeName>
</protein>
<keyword id="KW-0002">3D-structure</keyword>
<keyword id="KW-0677">Repeat</keyword>
<keyword id="KW-0687">Ribonucleoprotein</keyword>
<keyword id="KW-0689">Ribosomal protein</keyword>
<keyword id="KW-0853">WD repeat</keyword>
<comment type="similarity">
    <text evidence="1">Belongs to the WD repeat G protein beta family. Ribosomal protein RACK1 subfamily.</text>
</comment>
<reference key="1">
    <citation type="submission" date="1998-10" db="EMBL/GenBank/DDBJ databases">
        <title>Molecular cloning and expression in E.coli of activated protein kinase C receptor of Trypanosoma brucei.</title>
        <authorList>
            <person name="Djikeng A."/>
            <person name="Donelson J.E."/>
            <person name="Majiwa P.A.O."/>
        </authorList>
    </citation>
    <scope>NUCLEOTIDE SEQUENCE [MRNA]</scope>
    <source>
        <strain>MVAT4</strain>
    </source>
</reference>